<comment type="function">
    <text evidence="1">Involved in protein export. Acts as a chaperone by maintaining the newly synthesized protein in an open conformation. Functions as a peptidyl-prolyl cis-trans isomerase.</text>
</comment>
<comment type="catalytic activity">
    <reaction evidence="1">
        <text>[protein]-peptidylproline (omega=180) = [protein]-peptidylproline (omega=0)</text>
        <dbReference type="Rhea" id="RHEA:16237"/>
        <dbReference type="Rhea" id="RHEA-COMP:10747"/>
        <dbReference type="Rhea" id="RHEA-COMP:10748"/>
        <dbReference type="ChEBI" id="CHEBI:83833"/>
        <dbReference type="ChEBI" id="CHEBI:83834"/>
        <dbReference type="EC" id="5.2.1.8"/>
    </reaction>
</comment>
<comment type="subcellular location">
    <subcellularLocation>
        <location>Cytoplasm</location>
    </subcellularLocation>
    <text evidence="1">About half TF is bound to the ribosome near the polypeptide exit tunnel while the other half is free in the cytoplasm.</text>
</comment>
<comment type="domain">
    <text evidence="1">Consists of 3 domains; the N-terminus binds the ribosome, the middle domain has PPIase activity, while the C-terminus has intrinsic chaperone activity on its own.</text>
</comment>
<comment type="similarity">
    <text evidence="1">Belongs to the FKBP-type PPIase family. Tig subfamily.</text>
</comment>
<keyword id="KW-0131">Cell cycle</keyword>
<keyword id="KW-0132">Cell division</keyword>
<keyword id="KW-0143">Chaperone</keyword>
<keyword id="KW-0963">Cytoplasm</keyword>
<keyword id="KW-0413">Isomerase</keyword>
<keyword id="KW-1185">Reference proteome</keyword>
<keyword id="KW-0697">Rotamase</keyword>
<dbReference type="EC" id="5.2.1.8" evidence="1"/>
<dbReference type="EMBL" id="CP000285">
    <property type="protein sequence ID" value="ABE59398.1"/>
    <property type="molecule type" value="Genomic_DNA"/>
</dbReference>
<dbReference type="RefSeq" id="WP_011507344.1">
    <property type="nucleotide sequence ID" value="NC_007963.1"/>
</dbReference>
<dbReference type="SMR" id="Q1QVW0"/>
<dbReference type="STRING" id="290398.Csal_2047"/>
<dbReference type="GeneID" id="95334758"/>
<dbReference type="KEGG" id="csa:Csal_2047"/>
<dbReference type="eggNOG" id="COG0544">
    <property type="taxonomic scope" value="Bacteria"/>
</dbReference>
<dbReference type="HOGENOM" id="CLU_033058_2_0_6"/>
<dbReference type="OrthoDB" id="9767721at2"/>
<dbReference type="Proteomes" id="UP000000239">
    <property type="component" value="Chromosome"/>
</dbReference>
<dbReference type="GO" id="GO:0005737">
    <property type="term" value="C:cytoplasm"/>
    <property type="evidence" value="ECO:0007669"/>
    <property type="project" value="UniProtKB-SubCell"/>
</dbReference>
<dbReference type="GO" id="GO:0003755">
    <property type="term" value="F:peptidyl-prolyl cis-trans isomerase activity"/>
    <property type="evidence" value="ECO:0007669"/>
    <property type="project" value="UniProtKB-UniRule"/>
</dbReference>
<dbReference type="GO" id="GO:0044183">
    <property type="term" value="F:protein folding chaperone"/>
    <property type="evidence" value="ECO:0007669"/>
    <property type="project" value="TreeGrafter"/>
</dbReference>
<dbReference type="GO" id="GO:0043022">
    <property type="term" value="F:ribosome binding"/>
    <property type="evidence" value="ECO:0007669"/>
    <property type="project" value="TreeGrafter"/>
</dbReference>
<dbReference type="GO" id="GO:0051083">
    <property type="term" value="P:'de novo' cotranslational protein folding"/>
    <property type="evidence" value="ECO:0007669"/>
    <property type="project" value="TreeGrafter"/>
</dbReference>
<dbReference type="GO" id="GO:0051301">
    <property type="term" value="P:cell division"/>
    <property type="evidence" value="ECO:0007669"/>
    <property type="project" value="UniProtKB-KW"/>
</dbReference>
<dbReference type="GO" id="GO:0061077">
    <property type="term" value="P:chaperone-mediated protein folding"/>
    <property type="evidence" value="ECO:0007669"/>
    <property type="project" value="TreeGrafter"/>
</dbReference>
<dbReference type="GO" id="GO:0015031">
    <property type="term" value="P:protein transport"/>
    <property type="evidence" value="ECO:0007669"/>
    <property type="project" value="UniProtKB-UniRule"/>
</dbReference>
<dbReference type="GO" id="GO:0043335">
    <property type="term" value="P:protein unfolding"/>
    <property type="evidence" value="ECO:0007669"/>
    <property type="project" value="TreeGrafter"/>
</dbReference>
<dbReference type="FunFam" id="3.10.50.40:FF:000001">
    <property type="entry name" value="Trigger factor"/>
    <property type="match status" value="1"/>
</dbReference>
<dbReference type="Gene3D" id="3.10.50.40">
    <property type="match status" value="1"/>
</dbReference>
<dbReference type="Gene3D" id="3.30.70.1050">
    <property type="entry name" value="Trigger factor ribosome-binding domain"/>
    <property type="match status" value="1"/>
</dbReference>
<dbReference type="Gene3D" id="1.10.3120.10">
    <property type="entry name" value="Trigger factor, C-terminal domain"/>
    <property type="match status" value="1"/>
</dbReference>
<dbReference type="HAMAP" id="MF_00303">
    <property type="entry name" value="Trigger_factor_Tig"/>
    <property type="match status" value="1"/>
</dbReference>
<dbReference type="InterPro" id="IPR046357">
    <property type="entry name" value="PPIase_dom_sf"/>
</dbReference>
<dbReference type="InterPro" id="IPR001179">
    <property type="entry name" value="PPIase_FKBP_dom"/>
</dbReference>
<dbReference type="InterPro" id="IPR005215">
    <property type="entry name" value="Trig_fac"/>
</dbReference>
<dbReference type="InterPro" id="IPR008880">
    <property type="entry name" value="Trigger_fac_C"/>
</dbReference>
<dbReference type="InterPro" id="IPR037041">
    <property type="entry name" value="Trigger_fac_C_sf"/>
</dbReference>
<dbReference type="InterPro" id="IPR008881">
    <property type="entry name" value="Trigger_fac_ribosome-bd_bac"/>
</dbReference>
<dbReference type="InterPro" id="IPR036611">
    <property type="entry name" value="Trigger_fac_ribosome-bd_sf"/>
</dbReference>
<dbReference type="InterPro" id="IPR027304">
    <property type="entry name" value="Trigger_fact/SurA_dom_sf"/>
</dbReference>
<dbReference type="NCBIfam" id="TIGR00115">
    <property type="entry name" value="tig"/>
    <property type="match status" value="1"/>
</dbReference>
<dbReference type="PANTHER" id="PTHR30560">
    <property type="entry name" value="TRIGGER FACTOR CHAPERONE AND PEPTIDYL-PROLYL CIS/TRANS ISOMERASE"/>
    <property type="match status" value="1"/>
</dbReference>
<dbReference type="PANTHER" id="PTHR30560:SF3">
    <property type="entry name" value="TRIGGER FACTOR-LIKE PROTEIN TIG, CHLOROPLASTIC"/>
    <property type="match status" value="1"/>
</dbReference>
<dbReference type="Pfam" id="PF00254">
    <property type="entry name" value="FKBP_C"/>
    <property type="match status" value="1"/>
</dbReference>
<dbReference type="Pfam" id="PF05698">
    <property type="entry name" value="Trigger_C"/>
    <property type="match status" value="1"/>
</dbReference>
<dbReference type="Pfam" id="PF05697">
    <property type="entry name" value="Trigger_N"/>
    <property type="match status" value="1"/>
</dbReference>
<dbReference type="PIRSF" id="PIRSF003095">
    <property type="entry name" value="Trigger_factor"/>
    <property type="match status" value="1"/>
</dbReference>
<dbReference type="SUPFAM" id="SSF54534">
    <property type="entry name" value="FKBP-like"/>
    <property type="match status" value="1"/>
</dbReference>
<dbReference type="SUPFAM" id="SSF109998">
    <property type="entry name" value="Triger factor/SurA peptide-binding domain-like"/>
    <property type="match status" value="1"/>
</dbReference>
<dbReference type="SUPFAM" id="SSF102735">
    <property type="entry name" value="Trigger factor ribosome-binding domain"/>
    <property type="match status" value="1"/>
</dbReference>
<dbReference type="PROSITE" id="PS50059">
    <property type="entry name" value="FKBP_PPIASE"/>
    <property type="match status" value="1"/>
</dbReference>
<evidence type="ECO:0000255" key="1">
    <source>
        <dbReference type="HAMAP-Rule" id="MF_00303"/>
    </source>
</evidence>
<evidence type="ECO:0000256" key="2">
    <source>
        <dbReference type="SAM" id="MobiDB-lite"/>
    </source>
</evidence>
<gene>
    <name evidence="1" type="primary">tig</name>
    <name type="ordered locus">Csal_2047</name>
</gene>
<protein>
    <recommendedName>
        <fullName evidence="1">Trigger factor</fullName>
        <shortName evidence="1">TF</shortName>
        <ecNumber evidence="1">5.2.1.8</ecNumber>
    </recommendedName>
    <alternativeName>
        <fullName evidence="1">PPIase</fullName>
    </alternativeName>
</protein>
<sequence>MQVSVESTSQIERRVTVQVPAAEVDQAVATRLQETAKNVRLNGFRRGKIPLTVVRQRFGREVRNEVVGEMMRQHYVQAITQESLNPAGSPQVEPTVDEDGKDLEFVATLEVYPEFELNSIENTEIERPQAEVTEADVDQMIETLRTQHAEWEAVDRAAANGDQVTIDFEGYLGDEPFEGGAAEGHELELGSNSFIPGFEEQLVGAKAGDELEIKVTFPEDYQAAHLAGQEATFKVKVHKVAGKQLPEVDDEFIKRFGVEEGGVAAFRADVQKNMEHELSQAVTNRVKQQALEALQQANDIPVPQSLIQQETQGLKRQAAQQFGLGEDFDVSQLPDELFADQAKKRVQVGLLLAEVVKVNELDASDDEIKARVEELAQQYQQPEQVIEYYLKNDEMKNQIKSSVLEDKAVDKLLEQAQVKDVEMSYEQALQAAQQQEGAEEEAQEETSA</sequence>
<organism>
    <name type="scientific">Chromohalobacter salexigens (strain ATCC BAA-138 / DSM 3043 / CIP 106854 / NCIMB 13768 / 1H11)</name>
    <dbReference type="NCBI Taxonomy" id="290398"/>
    <lineage>
        <taxon>Bacteria</taxon>
        <taxon>Pseudomonadati</taxon>
        <taxon>Pseudomonadota</taxon>
        <taxon>Gammaproteobacteria</taxon>
        <taxon>Oceanospirillales</taxon>
        <taxon>Halomonadaceae</taxon>
        <taxon>Chromohalobacter</taxon>
    </lineage>
</organism>
<reference key="1">
    <citation type="journal article" date="2011" name="Stand. Genomic Sci.">
        <title>Complete genome sequence of the halophilic and highly halotolerant Chromohalobacter salexigens type strain (1H11(T)).</title>
        <authorList>
            <person name="Copeland A."/>
            <person name="O'Connor K."/>
            <person name="Lucas S."/>
            <person name="Lapidus A."/>
            <person name="Berry K.W."/>
            <person name="Detter J.C."/>
            <person name="Del Rio T.G."/>
            <person name="Hammon N."/>
            <person name="Dalin E."/>
            <person name="Tice H."/>
            <person name="Pitluck S."/>
            <person name="Bruce D."/>
            <person name="Goodwin L."/>
            <person name="Han C."/>
            <person name="Tapia R."/>
            <person name="Saunders E."/>
            <person name="Schmutz J."/>
            <person name="Brettin T."/>
            <person name="Larimer F."/>
            <person name="Land M."/>
            <person name="Hauser L."/>
            <person name="Vargas C."/>
            <person name="Nieto J.J."/>
            <person name="Kyrpides N.C."/>
            <person name="Ivanova N."/>
            <person name="Goker M."/>
            <person name="Klenk H.P."/>
            <person name="Csonka L.N."/>
            <person name="Woyke T."/>
        </authorList>
    </citation>
    <scope>NUCLEOTIDE SEQUENCE [LARGE SCALE GENOMIC DNA]</scope>
    <source>
        <strain>ATCC BAA-138 / DSM 3043 / CIP 106854 / NCIMB 13768 / 1H11</strain>
    </source>
</reference>
<name>TIG_CHRSD</name>
<feature type="chain" id="PRO_0000256543" description="Trigger factor">
    <location>
        <begin position="1"/>
        <end position="448"/>
    </location>
</feature>
<feature type="domain" description="PPIase FKBP-type" evidence="1">
    <location>
        <begin position="161"/>
        <end position="246"/>
    </location>
</feature>
<feature type="region of interest" description="Disordered" evidence="2">
    <location>
        <begin position="428"/>
        <end position="448"/>
    </location>
</feature>
<feature type="compositionally biased region" description="Acidic residues" evidence="2">
    <location>
        <begin position="437"/>
        <end position="448"/>
    </location>
</feature>
<proteinExistence type="inferred from homology"/>
<accession>Q1QVW0</accession>